<name>VES_SHIF8</name>
<comment type="similarity">
    <text evidence="1">Belongs to the Ves family.</text>
</comment>
<comment type="sequence caution" evidence="2">
    <conflict type="erroneous initiation">
        <sequence resource="EMBL-CDS" id="ABF03665"/>
    </conflict>
</comment>
<reference key="1">
    <citation type="journal article" date="2006" name="BMC Genomics">
        <title>Complete genome sequence of Shigella flexneri 5b and comparison with Shigella flexneri 2a.</title>
        <authorList>
            <person name="Nie H."/>
            <person name="Yang F."/>
            <person name="Zhang X."/>
            <person name="Yang J."/>
            <person name="Chen L."/>
            <person name="Wang J."/>
            <person name="Xiong Z."/>
            <person name="Peng J."/>
            <person name="Sun L."/>
            <person name="Dong J."/>
            <person name="Xue Y."/>
            <person name="Xu X."/>
            <person name="Chen S."/>
            <person name="Yao Z."/>
            <person name="Shen Y."/>
            <person name="Jin Q."/>
        </authorList>
    </citation>
    <scope>NUCLEOTIDE SEQUENCE [LARGE SCALE GENOMIC DNA]</scope>
    <source>
        <strain>8401</strain>
    </source>
</reference>
<dbReference type="EMBL" id="CP000266">
    <property type="protein sequence ID" value="ABF03665.1"/>
    <property type="status" value="ALT_INIT"/>
    <property type="molecule type" value="Genomic_DNA"/>
</dbReference>
<dbReference type="RefSeq" id="WP_001370505.1">
    <property type="nucleotide sequence ID" value="NC_008258.1"/>
</dbReference>
<dbReference type="SMR" id="Q0T4V0"/>
<dbReference type="KEGG" id="sfv:SFV_1478"/>
<dbReference type="HOGENOM" id="CLU_090931_5_0_6"/>
<dbReference type="Proteomes" id="UP000000659">
    <property type="component" value="Chromosome"/>
</dbReference>
<dbReference type="CDD" id="cd20293">
    <property type="entry name" value="cupin_HutD_N"/>
    <property type="match status" value="1"/>
</dbReference>
<dbReference type="Gene3D" id="2.60.120.10">
    <property type="entry name" value="Jelly Rolls"/>
    <property type="match status" value="1"/>
</dbReference>
<dbReference type="HAMAP" id="MF_01591">
    <property type="entry name" value="Ves"/>
    <property type="match status" value="1"/>
</dbReference>
<dbReference type="InterPro" id="IPR014710">
    <property type="entry name" value="RmlC-like_jellyroll"/>
</dbReference>
<dbReference type="InterPro" id="IPR011051">
    <property type="entry name" value="RmlC_Cupin_sf"/>
</dbReference>
<dbReference type="InterPro" id="IPR010282">
    <property type="entry name" value="Uncharacterised_HutD/Ves"/>
</dbReference>
<dbReference type="InterPro" id="IPR023482">
    <property type="entry name" value="Uncharacterised_Ves"/>
</dbReference>
<dbReference type="NCBIfam" id="NF008488">
    <property type="entry name" value="PRK11396.1"/>
    <property type="match status" value="1"/>
</dbReference>
<dbReference type="PANTHER" id="PTHR37943">
    <property type="entry name" value="PROTEIN VES"/>
    <property type="match status" value="1"/>
</dbReference>
<dbReference type="PANTHER" id="PTHR37943:SF1">
    <property type="entry name" value="PROTEIN VES"/>
    <property type="match status" value="1"/>
</dbReference>
<dbReference type="Pfam" id="PF05962">
    <property type="entry name" value="HutD"/>
    <property type="match status" value="1"/>
</dbReference>
<dbReference type="SUPFAM" id="SSF51182">
    <property type="entry name" value="RmlC-like cupins"/>
    <property type="match status" value="1"/>
</dbReference>
<gene>
    <name evidence="1" type="primary">ves</name>
    <name type="ordered locus">SFV_1478</name>
</gene>
<organism>
    <name type="scientific">Shigella flexneri serotype 5b (strain 8401)</name>
    <dbReference type="NCBI Taxonomy" id="373384"/>
    <lineage>
        <taxon>Bacteria</taxon>
        <taxon>Pseudomonadati</taxon>
        <taxon>Pseudomonadota</taxon>
        <taxon>Gammaproteobacteria</taxon>
        <taxon>Enterobacterales</taxon>
        <taxon>Enterobacteriaceae</taxon>
        <taxon>Shigella</taxon>
    </lineage>
</organism>
<sequence length="191" mass="21573">MEYFDMRKMSVNLWRNAAGETREICTFPPAKRDFYWRASIASIAANGEFSLFPGMERIVTLLEGGEMLLESADRFNHTLKPLQPFAFTADQVVKAKLTAGQMSMDFNIMTRLDVCKAKVRIAERTFTTFGSRGGVVFVINGAWQLGDKLLTTDQGACWFDGRHTLRLLQPQGKLLFSEINWLAGHSPDQVQ</sequence>
<evidence type="ECO:0000255" key="1">
    <source>
        <dbReference type="HAMAP-Rule" id="MF_01591"/>
    </source>
</evidence>
<evidence type="ECO:0000305" key="2"/>
<proteinExistence type="inferred from homology"/>
<protein>
    <recommendedName>
        <fullName evidence="1">Protein Ves</fullName>
    </recommendedName>
</protein>
<feature type="chain" id="PRO_0000315011" description="Protein Ves">
    <location>
        <begin position="1"/>
        <end position="191"/>
    </location>
</feature>
<accession>Q0T4V0</accession>